<sequence>MEAALEQHLEDTMKNPSIVGVLCTDSQGLNLGCCGSLSDKHAGVISILPQYAAKLTTDPTDVPVVCLESDNGTVMIQKHDHLTVAVHKVTS</sequence>
<feature type="chain" id="PRO_0000331596" description="Ragulator complex protein LAMTOR5">
    <location>
        <begin position="1"/>
        <end position="91"/>
    </location>
</feature>
<proteinExistence type="inferred from homology"/>
<accession>Q6IRS2</accession>
<reference key="1">
    <citation type="submission" date="2004-05" db="EMBL/GenBank/DDBJ databases">
        <authorList>
            <consortium name="NIH - Xenopus Gene Collection (XGC) project"/>
        </authorList>
    </citation>
    <scope>NUCLEOTIDE SEQUENCE [LARGE SCALE MRNA]</scope>
    <source>
        <tissue>Liver</tissue>
    </source>
</reference>
<protein>
    <recommendedName>
        <fullName>Ragulator complex protein LAMTOR5</fullName>
    </recommendedName>
    <alternativeName>
        <fullName>Late endosomal/lysosomal adaptor and MAPK and MTOR activator 5</fullName>
    </alternativeName>
</protein>
<name>LTOR5_XENLA</name>
<organism>
    <name type="scientific">Xenopus laevis</name>
    <name type="common">African clawed frog</name>
    <dbReference type="NCBI Taxonomy" id="8355"/>
    <lineage>
        <taxon>Eukaryota</taxon>
        <taxon>Metazoa</taxon>
        <taxon>Chordata</taxon>
        <taxon>Craniata</taxon>
        <taxon>Vertebrata</taxon>
        <taxon>Euteleostomi</taxon>
        <taxon>Amphibia</taxon>
        <taxon>Batrachia</taxon>
        <taxon>Anura</taxon>
        <taxon>Pipoidea</taxon>
        <taxon>Pipidae</taxon>
        <taxon>Xenopodinae</taxon>
        <taxon>Xenopus</taxon>
        <taxon>Xenopus</taxon>
    </lineage>
</organism>
<gene>
    <name type="primary">lamtor5</name>
    <name type="synonym">hbxip</name>
</gene>
<dbReference type="EMBL" id="BC070520">
    <property type="protein sequence ID" value="AAH70520.1"/>
    <property type="molecule type" value="mRNA"/>
</dbReference>
<dbReference type="RefSeq" id="NP_001084999.1">
    <property type="nucleotide sequence ID" value="NM_001091530.1"/>
</dbReference>
<dbReference type="RefSeq" id="XP_018103694.1">
    <property type="nucleotide sequence ID" value="XM_018248205.1"/>
</dbReference>
<dbReference type="SMR" id="Q6IRS2"/>
<dbReference type="DNASU" id="432061"/>
<dbReference type="GeneID" id="432061"/>
<dbReference type="KEGG" id="xla:432061"/>
<dbReference type="AGR" id="Xenbase:XB-GENE-6256281"/>
<dbReference type="CTD" id="432061"/>
<dbReference type="Xenbase" id="XB-GENE-6256281">
    <property type="gene designation" value="lamtor5.S"/>
</dbReference>
<dbReference type="OMA" id="GIIYKQT"/>
<dbReference type="OrthoDB" id="76862at2759"/>
<dbReference type="Proteomes" id="UP000186698">
    <property type="component" value="Chromosome 2S"/>
</dbReference>
<dbReference type="Bgee" id="432061">
    <property type="expression patterns" value="Expressed in spleen and 19 other cell types or tissues"/>
</dbReference>
<dbReference type="GO" id="GO:0005765">
    <property type="term" value="C:lysosomal membrane"/>
    <property type="evidence" value="ECO:0000250"/>
    <property type="project" value="UniProtKB"/>
</dbReference>
<dbReference type="GO" id="GO:0005764">
    <property type="term" value="C:lysosome"/>
    <property type="evidence" value="ECO:0000250"/>
    <property type="project" value="UniProtKB"/>
</dbReference>
<dbReference type="GO" id="GO:0071986">
    <property type="term" value="C:Ragulator complex"/>
    <property type="evidence" value="ECO:0000250"/>
    <property type="project" value="UniProtKB"/>
</dbReference>
<dbReference type="GO" id="GO:0005085">
    <property type="term" value="F:guanyl-nucleotide exchange factor activity"/>
    <property type="evidence" value="ECO:0007669"/>
    <property type="project" value="TreeGrafter"/>
</dbReference>
<dbReference type="GO" id="GO:0071230">
    <property type="term" value="P:cellular response to amino acid stimulus"/>
    <property type="evidence" value="ECO:0000250"/>
    <property type="project" value="UniProtKB"/>
</dbReference>
<dbReference type="GO" id="GO:0043066">
    <property type="term" value="P:negative regulation of apoptotic process"/>
    <property type="evidence" value="ECO:0007669"/>
    <property type="project" value="InterPro"/>
</dbReference>
<dbReference type="GO" id="GO:0032008">
    <property type="term" value="P:positive regulation of TOR signaling"/>
    <property type="evidence" value="ECO:0000250"/>
    <property type="project" value="UniProtKB"/>
</dbReference>
<dbReference type="GO" id="GO:1904263">
    <property type="term" value="P:positive regulation of TORC1 signaling"/>
    <property type="evidence" value="ECO:0000250"/>
    <property type="project" value="UniProtKB"/>
</dbReference>
<dbReference type="GO" id="GO:0061462">
    <property type="term" value="P:protein localization to lysosome"/>
    <property type="evidence" value="ECO:0000250"/>
    <property type="project" value="UniProtKB"/>
</dbReference>
<dbReference type="GO" id="GO:0008361">
    <property type="term" value="P:regulation of cell size"/>
    <property type="evidence" value="ECO:0000250"/>
    <property type="project" value="UniProtKB"/>
</dbReference>
<dbReference type="FunFam" id="3.30.450.30:FF:000005">
    <property type="entry name" value="Ragulator complex protein LAMTOR5 homolog"/>
    <property type="match status" value="1"/>
</dbReference>
<dbReference type="Gene3D" id="3.30.450.30">
    <property type="entry name" value="Dynein light chain 2a, cytoplasmic"/>
    <property type="match status" value="1"/>
</dbReference>
<dbReference type="InterPro" id="IPR024135">
    <property type="entry name" value="LAMTOR5"/>
</dbReference>
<dbReference type="PANTHER" id="PTHR13342">
    <property type="entry name" value="RAGULATOR COMPLEX PROTEIN LAMTOR5"/>
    <property type="match status" value="1"/>
</dbReference>
<dbReference type="PANTHER" id="PTHR13342:SF2">
    <property type="entry name" value="RAGULATOR COMPLEX PROTEIN LAMTOR5"/>
    <property type="match status" value="1"/>
</dbReference>
<dbReference type="Pfam" id="PF16672">
    <property type="entry name" value="LAMTOR5"/>
    <property type="match status" value="1"/>
</dbReference>
<dbReference type="PRINTS" id="PR02092">
    <property type="entry name" value="HEPBVIRUSXIP"/>
</dbReference>
<keyword id="KW-0963">Cytoplasm</keyword>
<keyword id="KW-0458">Lysosome</keyword>
<keyword id="KW-1185">Reference proteome</keyword>
<comment type="function">
    <text evidence="1">As part of the Ragulator complex it is involved in amino acid sensing and activation of mTORC1, a signaling complex promoting cell growth in response to growth factors, energy levels, and amino acids. Activated by amino acids through a mechanism involving the lysosomal V-ATPase, the Ragulator plays a dual role for the small GTPases Rag (RagA/RRAGA, RagB/RRAGB, RagC/RRAGC and/or RagD/RRAGD): it (1) acts as a guanine nucleotide exchange factor (GEF), activating the small GTPases Rag and (2) mediates recruitment of Rag GTPases to the lysosome membrane. Activated Ragulator and Rag GTPases function as a scaffold recruiting mTORC1 to lysosomes where it is in turn activated.</text>
</comment>
<comment type="subunit">
    <text evidence="1">Part of the Ragulator complex composed of lamtor1, lamtor2, lamtor3, lamtor4 and lamtor5. The Ragulator complex interacts with slc38a9; the probable amino acid sensor. Component of the lysosomal folliculin complex (LFC).</text>
</comment>
<comment type="subcellular location">
    <subcellularLocation>
        <location evidence="1">Cytoplasm</location>
    </subcellularLocation>
    <subcellularLocation>
        <location evidence="1">Lysosome</location>
    </subcellularLocation>
</comment>
<comment type="similarity">
    <text evidence="2">Belongs to the LAMTOR5 family.</text>
</comment>
<evidence type="ECO:0000250" key="1">
    <source>
        <dbReference type="UniProtKB" id="O43504"/>
    </source>
</evidence>
<evidence type="ECO:0000305" key="2"/>